<evidence type="ECO:0000250" key="1"/>
<evidence type="ECO:0000250" key="2">
    <source>
        <dbReference type="UniProtKB" id="Q9UQ84"/>
    </source>
</evidence>
<evidence type="ECO:0000256" key="3">
    <source>
        <dbReference type="SAM" id="MobiDB-lite"/>
    </source>
</evidence>
<evidence type="ECO:0000269" key="4">
    <source>
    </source>
</evidence>
<evidence type="ECO:0000269" key="5">
    <source>
    </source>
</evidence>
<evidence type="ECO:0000269" key="6">
    <source>
    </source>
</evidence>
<evidence type="ECO:0000305" key="7"/>
<reference key="1">
    <citation type="journal article" date="1999" name="Nucleic Acids Res.">
        <title>Expression specificity of the mouse exonuclease 1 (mExo1) gene.</title>
        <authorList>
            <person name="Lee B.-I."/>
            <person name="Shannon M."/>
            <person name="Stubbs L."/>
            <person name="Wilson D.M. III"/>
        </authorList>
    </citation>
    <scope>NUCLEOTIDE SEQUENCE [MRNA]</scope>
    <scope>TISSUE SPECIFICITY</scope>
    <scope>DEVELOPMENTAL STAGE</scope>
</reference>
<reference key="2">
    <citation type="journal article" date="2005" name="Science">
        <title>The transcriptional landscape of the mammalian genome.</title>
        <authorList>
            <person name="Carninci P."/>
            <person name="Kasukawa T."/>
            <person name="Katayama S."/>
            <person name="Gough J."/>
            <person name="Frith M.C."/>
            <person name="Maeda N."/>
            <person name="Oyama R."/>
            <person name="Ravasi T."/>
            <person name="Lenhard B."/>
            <person name="Wells C."/>
            <person name="Kodzius R."/>
            <person name="Shimokawa K."/>
            <person name="Bajic V.B."/>
            <person name="Brenner S.E."/>
            <person name="Batalov S."/>
            <person name="Forrest A.R."/>
            <person name="Zavolan M."/>
            <person name="Davis M.J."/>
            <person name="Wilming L.G."/>
            <person name="Aidinis V."/>
            <person name="Allen J.E."/>
            <person name="Ambesi-Impiombato A."/>
            <person name="Apweiler R."/>
            <person name="Aturaliya R.N."/>
            <person name="Bailey T.L."/>
            <person name="Bansal M."/>
            <person name="Baxter L."/>
            <person name="Beisel K.W."/>
            <person name="Bersano T."/>
            <person name="Bono H."/>
            <person name="Chalk A.M."/>
            <person name="Chiu K.P."/>
            <person name="Choudhary V."/>
            <person name="Christoffels A."/>
            <person name="Clutterbuck D.R."/>
            <person name="Crowe M.L."/>
            <person name="Dalla E."/>
            <person name="Dalrymple B.P."/>
            <person name="de Bono B."/>
            <person name="Della Gatta G."/>
            <person name="di Bernardo D."/>
            <person name="Down T."/>
            <person name="Engstrom P."/>
            <person name="Fagiolini M."/>
            <person name="Faulkner G."/>
            <person name="Fletcher C.F."/>
            <person name="Fukushima T."/>
            <person name="Furuno M."/>
            <person name="Futaki S."/>
            <person name="Gariboldi M."/>
            <person name="Georgii-Hemming P."/>
            <person name="Gingeras T.R."/>
            <person name="Gojobori T."/>
            <person name="Green R.E."/>
            <person name="Gustincich S."/>
            <person name="Harbers M."/>
            <person name="Hayashi Y."/>
            <person name="Hensch T.K."/>
            <person name="Hirokawa N."/>
            <person name="Hill D."/>
            <person name="Huminiecki L."/>
            <person name="Iacono M."/>
            <person name="Ikeo K."/>
            <person name="Iwama A."/>
            <person name="Ishikawa T."/>
            <person name="Jakt M."/>
            <person name="Kanapin A."/>
            <person name="Katoh M."/>
            <person name="Kawasawa Y."/>
            <person name="Kelso J."/>
            <person name="Kitamura H."/>
            <person name="Kitano H."/>
            <person name="Kollias G."/>
            <person name="Krishnan S.P."/>
            <person name="Kruger A."/>
            <person name="Kummerfeld S.K."/>
            <person name="Kurochkin I.V."/>
            <person name="Lareau L.F."/>
            <person name="Lazarevic D."/>
            <person name="Lipovich L."/>
            <person name="Liu J."/>
            <person name="Liuni S."/>
            <person name="McWilliam S."/>
            <person name="Madan Babu M."/>
            <person name="Madera M."/>
            <person name="Marchionni L."/>
            <person name="Matsuda H."/>
            <person name="Matsuzawa S."/>
            <person name="Miki H."/>
            <person name="Mignone F."/>
            <person name="Miyake S."/>
            <person name="Morris K."/>
            <person name="Mottagui-Tabar S."/>
            <person name="Mulder N."/>
            <person name="Nakano N."/>
            <person name="Nakauchi H."/>
            <person name="Ng P."/>
            <person name="Nilsson R."/>
            <person name="Nishiguchi S."/>
            <person name="Nishikawa S."/>
            <person name="Nori F."/>
            <person name="Ohara O."/>
            <person name="Okazaki Y."/>
            <person name="Orlando V."/>
            <person name="Pang K.C."/>
            <person name="Pavan W.J."/>
            <person name="Pavesi G."/>
            <person name="Pesole G."/>
            <person name="Petrovsky N."/>
            <person name="Piazza S."/>
            <person name="Reed J."/>
            <person name="Reid J.F."/>
            <person name="Ring B.Z."/>
            <person name="Ringwald M."/>
            <person name="Rost B."/>
            <person name="Ruan Y."/>
            <person name="Salzberg S.L."/>
            <person name="Sandelin A."/>
            <person name="Schneider C."/>
            <person name="Schoenbach C."/>
            <person name="Sekiguchi K."/>
            <person name="Semple C.A."/>
            <person name="Seno S."/>
            <person name="Sessa L."/>
            <person name="Sheng Y."/>
            <person name="Shibata Y."/>
            <person name="Shimada H."/>
            <person name="Shimada K."/>
            <person name="Silva D."/>
            <person name="Sinclair B."/>
            <person name="Sperling S."/>
            <person name="Stupka E."/>
            <person name="Sugiura K."/>
            <person name="Sultana R."/>
            <person name="Takenaka Y."/>
            <person name="Taki K."/>
            <person name="Tammoja K."/>
            <person name="Tan S.L."/>
            <person name="Tang S."/>
            <person name="Taylor M.S."/>
            <person name="Tegner J."/>
            <person name="Teichmann S.A."/>
            <person name="Ueda H.R."/>
            <person name="van Nimwegen E."/>
            <person name="Verardo R."/>
            <person name="Wei C.L."/>
            <person name="Yagi K."/>
            <person name="Yamanishi H."/>
            <person name="Zabarovsky E."/>
            <person name="Zhu S."/>
            <person name="Zimmer A."/>
            <person name="Hide W."/>
            <person name="Bult C."/>
            <person name="Grimmond S.M."/>
            <person name="Teasdale R.D."/>
            <person name="Liu E.T."/>
            <person name="Brusic V."/>
            <person name="Quackenbush J."/>
            <person name="Wahlestedt C."/>
            <person name="Mattick J.S."/>
            <person name="Hume D.A."/>
            <person name="Kai C."/>
            <person name="Sasaki D."/>
            <person name="Tomaru Y."/>
            <person name="Fukuda S."/>
            <person name="Kanamori-Katayama M."/>
            <person name="Suzuki M."/>
            <person name="Aoki J."/>
            <person name="Arakawa T."/>
            <person name="Iida J."/>
            <person name="Imamura K."/>
            <person name="Itoh M."/>
            <person name="Kato T."/>
            <person name="Kawaji H."/>
            <person name="Kawagashira N."/>
            <person name="Kawashima T."/>
            <person name="Kojima M."/>
            <person name="Kondo S."/>
            <person name="Konno H."/>
            <person name="Nakano K."/>
            <person name="Ninomiya N."/>
            <person name="Nishio T."/>
            <person name="Okada M."/>
            <person name="Plessy C."/>
            <person name="Shibata K."/>
            <person name="Shiraki T."/>
            <person name="Suzuki S."/>
            <person name="Tagami M."/>
            <person name="Waki K."/>
            <person name="Watahiki A."/>
            <person name="Okamura-Oho Y."/>
            <person name="Suzuki H."/>
            <person name="Kawai J."/>
            <person name="Hayashizaki Y."/>
        </authorList>
    </citation>
    <scope>NUCLEOTIDE SEQUENCE [LARGE SCALE MRNA]</scope>
    <source>
        <strain>C57BL/6J</strain>
        <tissue>Mammary gland</tissue>
        <tissue>Skin</tissue>
    </source>
</reference>
<reference key="3">
    <citation type="journal article" date="2004" name="Genome Res.">
        <title>The status, quality, and expansion of the NIH full-length cDNA project: the Mammalian Gene Collection (MGC).</title>
        <authorList>
            <consortium name="The MGC Project Team"/>
        </authorList>
    </citation>
    <scope>NUCLEOTIDE SEQUENCE [LARGE SCALE MRNA]</scope>
    <source>
        <strain>FVB/N</strain>
        <tissue>Mammary gland</tissue>
    </source>
</reference>
<reference key="4">
    <citation type="journal article" date="2003" name="Genes Dev.">
        <title>Inactivation of exonuclease 1 in mice results in DNA mismatch repair defects, increased cancer susceptibility, and male and female sterility.</title>
        <authorList>
            <person name="Wei K."/>
            <person name="Clark A.B."/>
            <person name="Wong E."/>
            <person name="Kane M.F."/>
            <person name="Mazur D.J."/>
            <person name="Parris T."/>
            <person name="Kolas N.K."/>
            <person name="Russell R."/>
            <person name="Hou H. Jr."/>
            <person name="Kneitz B."/>
            <person name="Yang G."/>
            <person name="Kunkel T.A."/>
            <person name="Kolodner R.D."/>
            <person name="Cohen P.E."/>
            <person name="Edelmann W."/>
        </authorList>
    </citation>
    <scope>FUNCTION</scope>
</reference>
<reference key="5">
    <citation type="journal article" date="2004" name="Nat. Immunol.">
        <title>Altered somatic hypermutation and reduced class-switch recombination in exonuclease 1-mutant mice.</title>
        <authorList>
            <person name="Bardwell P.D."/>
            <person name="Woo C.J."/>
            <person name="Wei K."/>
            <person name="Li Z."/>
            <person name="Martin A."/>
            <person name="Sack S.Z."/>
            <person name="Parris T."/>
            <person name="Edelmann W."/>
            <person name="Scharff M.D."/>
        </authorList>
    </citation>
    <scope>FUNCTION</scope>
</reference>
<feature type="chain" id="PRO_0000154040" description="Exonuclease 1">
    <location>
        <begin position="1"/>
        <end position="837"/>
    </location>
</feature>
<feature type="region of interest" description="N-domain">
    <location>
        <begin position="1"/>
        <end position="99"/>
    </location>
</feature>
<feature type="region of interest" description="Interaction with MSH3" evidence="1">
    <location>
        <begin position="129"/>
        <end position="386"/>
    </location>
</feature>
<feature type="region of interest" description="I-domain">
    <location>
        <begin position="138"/>
        <end position="229"/>
    </location>
</feature>
<feature type="region of interest" description="Disordered" evidence="3">
    <location>
        <begin position="345"/>
        <end position="367"/>
    </location>
</feature>
<feature type="region of interest" description="Interaction with MLH1" evidence="1">
    <location>
        <begin position="387"/>
        <end position="488"/>
    </location>
</feature>
<feature type="region of interest" description="Disordered" evidence="3">
    <location>
        <begin position="440"/>
        <end position="477"/>
    </location>
</feature>
<feature type="region of interest" description="Disordered" evidence="3">
    <location>
        <begin position="555"/>
        <end position="589"/>
    </location>
</feature>
<feature type="region of interest" description="Interaction with MSH2" evidence="1">
    <location>
        <begin position="591"/>
        <end position="837"/>
    </location>
</feature>
<feature type="region of interest" description="Disordered" evidence="3">
    <location>
        <begin position="608"/>
        <end position="740"/>
    </location>
</feature>
<feature type="region of interest" description="Interaction with MLH1" evidence="1">
    <location>
        <begin position="778"/>
        <end position="837"/>
    </location>
</feature>
<feature type="compositionally biased region" description="Polar residues" evidence="3">
    <location>
        <begin position="449"/>
        <end position="462"/>
    </location>
</feature>
<feature type="compositionally biased region" description="Polar residues" evidence="3">
    <location>
        <begin position="556"/>
        <end position="565"/>
    </location>
</feature>
<feature type="compositionally biased region" description="Polar residues" evidence="3">
    <location>
        <begin position="611"/>
        <end position="623"/>
    </location>
</feature>
<feature type="compositionally biased region" description="Polar residues" evidence="3">
    <location>
        <begin position="665"/>
        <end position="690"/>
    </location>
</feature>
<feature type="compositionally biased region" description="Polar residues" evidence="3">
    <location>
        <begin position="699"/>
        <end position="713"/>
    </location>
</feature>
<feature type="binding site" evidence="1">
    <location>
        <position position="30"/>
    </location>
    <ligand>
        <name>Mg(2+)</name>
        <dbReference type="ChEBI" id="CHEBI:18420"/>
        <label>1</label>
    </ligand>
</feature>
<feature type="binding site" evidence="1">
    <location>
        <position position="78"/>
    </location>
    <ligand>
        <name>Mg(2+)</name>
        <dbReference type="ChEBI" id="CHEBI:18420"/>
        <label>1</label>
    </ligand>
</feature>
<feature type="binding site" evidence="1">
    <location>
        <position position="150"/>
    </location>
    <ligand>
        <name>Mg(2+)</name>
        <dbReference type="ChEBI" id="CHEBI:18420"/>
        <label>1</label>
    </ligand>
</feature>
<feature type="binding site" evidence="1">
    <location>
        <position position="152"/>
    </location>
    <ligand>
        <name>Mg(2+)</name>
        <dbReference type="ChEBI" id="CHEBI:18420"/>
        <label>1</label>
    </ligand>
</feature>
<feature type="binding site" evidence="1">
    <location>
        <position position="171"/>
    </location>
    <ligand>
        <name>Mg(2+)</name>
        <dbReference type="ChEBI" id="CHEBI:18420"/>
        <label>2</label>
    </ligand>
</feature>
<feature type="binding site" evidence="1">
    <location>
        <position position="173"/>
    </location>
    <ligand>
        <name>Mg(2+)</name>
        <dbReference type="ChEBI" id="CHEBI:18420"/>
        <label>2</label>
    </ligand>
</feature>
<feature type="binding site" evidence="1">
    <location>
        <position position="225"/>
    </location>
    <ligand>
        <name>Mg(2+)</name>
        <dbReference type="ChEBI" id="CHEBI:18420"/>
        <label>2</label>
    </ligand>
</feature>
<feature type="modified residue" description="N6-acetyllysine" evidence="2">
    <location>
        <position position="480"/>
    </location>
</feature>
<feature type="modified residue" description="Phosphoserine" evidence="2">
    <location>
        <position position="589"/>
    </location>
</feature>
<feature type="modified residue" description="Phosphoserine" evidence="2">
    <location>
        <position position="601"/>
    </location>
</feature>
<feature type="modified residue" description="Phosphothreonine" evidence="2">
    <location>
        <position position="612"/>
    </location>
</feature>
<feature type="modified residue" description="Phosphoserine" evidence="2">
    <location>
        <position position="614"/>
    </location>
</feature>
<feature type="modified residue" description="Phosphoserine" evidence="2">
    <location>
        <position position="666"/>
    </location>
</feature>
<feature type="modified residue" description="Phosphoserine" evidence="2">
    <location>
        <position position="737"/>
    </location>
</feature>
<feature type="sequence conflict" description="In Ref. 1; CAB51863 and 2; BAE38768." evidence="7" ref="1 2">
    <original>T</original>
    <variation>A</variation>
    <location>
        <position position="366"/>
    </location>
</feature>
<feature type="sequence conflict" description="In Ref. 2; BAE38768." evidence="7" ref="2">
    <original>P</original>
    <variation>T</variation>
    <location>
        <position position="523"/>
    </location>
</feature>
<feature type="sequence conflict" description="In Ref. 1; CAB51863." evidence="7" ref="1">
    <original>T</original>
    <variation>M</variation>
    <location>
        <position position="557"/>
    </location>
</feature>
<feature type="sequence conflict" description="In Ref. 2; BAE38768." evidence="7" ref="2">
    <original>L</original>
    <variation>P</variation>
    <location>
        <position position="560"/>
    </location>
</feature>
<feature type="sequence conflict" description="In Ref. 1; CAB51863." evidence="7" ref="1">
    <original>K</original>
    <variation>Q</variation>
    <location>
        <position position="648"/>
    </location>
</feature>
<feature type="sequence conflict" description="In Ref. 1; CAB51863 and 2; BAE38768." evidence="7" ref="1 2">
    <original>L</original>
    <variation>P</variation>
    <location>
        <position position="652"/>
    </location>
</feature>
<feature type="sequence conflict" description="In Ref. 1; CAB51863." evidence="7" ref="1">
    <original>S</original>
    <variation>L</variation>
    <location>
        <position position="666"/>
    </location>
</feature>
<proteinExistence type="evidence at transcript level"/>
<gene>
    <name type="primary">Exo1</name>
</gene>
<organism>
    <name type="scientific">Mus musculus</name>
    <name type="common">Mouse</name>
    <dbReference type="NCBI Taxonomy" id="10090"/>
    <lineage>
        <taxon>Eukaryota</taxon>
        <taxon>Metazoa</taxon>
        <taxon>Chordata</taxon>
        <taxon>Craniata</taxon>
        <taxon>Vertebrata</taxon>
        <taxon>Euteleostomi</taxon>
        <taxon>Mammalia</taxon>
        <taxon>Eutheria</taxon>
        <taxon>Euarchontoglires</taxon>
        <taxon>Glires</taxon>
        <taxon>Rodentia</taxon>
        <taxon>Myomorpha</taxon>
        <taxon>Muroidea</taxon>
        <taxon>Muridae</taxon>
        <taxon>Murinae</taxon>
        <taxon>Mus</taxon>
        <taxon>Mus</taxon>
    </lineage>
</organism>
<name>EXO1_MOUSE</name>
<accession>Q9QZ11</accession>
<accession>Q3TLM4</accession>
<accession>Q923A5</accession>
<sequence length="837" mass="92022">MGIQGLLQFIQEASEPVNVKKYKGQAVAVDTYCWLHKGAIACAEKLAKGEPTDRYVGFCMKFVNMLLSYGVKPILIFDGCTLPSKKEVERSRRERRQSNLLKGKQLLREGKVSEARDCFARSINITHAMAHKVIKAARALGVDCLVAPYEADAQLAYLNKAGIVQAVITEDSDLLAFGCKKVILKMDQFGNGLEVDQARLGMCKQLGDVFTEEKFRYMCILSGCDYLASLRGIGLAKACKVLRLANNPDIVKVIKKIGHYLRMNITVPEDYITGFIRANNTFLYQLVFDPIQRKLVPLNAYGDDVNPETLTYAGQYVGDSVALQIALGNRDVNTFEQIDDYSPDTMPAHSRSHSWNEKAGQKPPGTNSIWHKNYCPRLEVNSVSHAPQLKEKPSTLGLKQVISTKGLNLPRKSCVLKRPRNEALAEDDLLSQYSSVSKKIKENGCGDGTSPNSSKMSKSCPDSGTAHKTDAHTPSKMRNKFATFLQRRNEESGAVVVPGTRSRFFCSSQDFDNFIPKKESGQPLNETVATGKATTSLLGALDCPDTEGHKPVDANGTHNLSSQIPGNAAVSPEDEAQSSETSKLLGAMSPPSLGTLRSCFSWSGTLREFSRTPSPSASTTLQQFRRKSDPPACLPEASAVVTDRCDSKSEMLGETSQPLHELGCSSRSQESMDSSCGLNTSSLSQPSSRDSGSEESDCNNKSLDNQGEQNSKQHLPHFSKKDGLRRNKVPGLCRSSSMDSFSTTKIKPLVPARVSGLSKKSGSMQTRKHHDVENKPGLQTKISELWKNFGFKKDSEKLPSCKKPLSPVKDNIQLTPETEDEIFNKPECVRAQRAIFH</sequence>
<protein>
    <recommendedName>
        <fullName>Exonuclease 1</fullName>
        <shortName>mExo1</shortName>
        <ecNumber>3.1.-.-</ecNumber>
    </recommendedName>
    <alternativeName>
        <fullName>Exonuclease I</fullName>
    </alternativeName>
</protein>
<comment type="function">
    <text evidence="5 6">5'-&gt;3' double-stranded DNA exonuclease which may also possess a cryptic 3'-&gt;5' double-stranded DNA exonuclease activity. Functions in DNA mismatch repair (MMR) to excise mismatch-containing DNA tracts directed by strand breaks located either 5' or 3' to the mismatch. Also exhibits endonuclease activity against 5'-overhanging flap structures similar to those generated by displacement synthesis when DNA polymerase encounters the 5'-end of a downstream Okazaki fragment. Required for somatic hypermutation (SHM) and class switch recombination (CSR) of immunoglobulin genes. Essential for male and female meiosis.</text>
</comment>
<comment type="cofactor">
    <cofactor evidence="1">
        <name>Mg(2+)</name>
        <dbReference type="ChEBI" id="CHEBI:18420"/>
    </cofactor>
    <text evidence="1">Binds 2 magnesium ions per subunit. They probably participate in the reaction catalyzed by the enzyme. May bind an additional third magnesium ion after substrate binding.</text>
</comment>
<comment type="subunit">
    <text evidence="2">Interacts with the MLH1-PMS2 heterodimer via MLH1. Interacts with MSH3. Interacts with the MSH2-MSH6 heterodimer via MSH2, and this interaction may increase the processivity of the 5'-&gt;3' exonuclease activity. Interacts with PCNA, and this interaction may both stimulate the cryptic 3'-&gt;5' exonuclease activity and suppress the 5'-&gt;3' exonuclease activity. Interacts with WRN, and this interaction stimulates both the 5'-&gt;3' exonuclease activity and cleavage of 5'-overhanging flap structures. Interacts with RECQL/RECQ1, and this interaction stimulates cleavage of 5'-overhanging flap structures. Interacts with DNA helicase ZGRF1; the interaction is increased following DNA damage induction.</text>
</comment>
<comment type="subcellular location">
    <subcellularLocation>
        <location evidence="1">Nucleus</location>
    </subcellularLocation>
    <text evidence="1">Colocalizes with PCNA to discrete nuclear foci in S-phase.</text>
</comment>
<comment type="tissue specificity">
    <text evidence="4">Highly expressed in the spleen and testis. Also expressed in the bone marrow, brain, lung, lymph node and thymus.</text>
</comment>
<comment type="developmental stage">
    <text evidence="4">Postnatal expression in the testis is elevated at the onset of pachytene (day 14).</text>
</comment>
<comment type="PTM">
    <text evidence="1">Phosphorylated upon DNA damage and in response to agents stalling DNA replication, probably by ATM or ATR.</text>
</comment>
<comment type="similarity">
    <text evidence="7">Belongs to the XPG/RAD2 endonuclease family. EXO1 subfamily.</text>
</comment>
<keyword id="KW-0007">Acetylation</keyword>
<keyword id="KW-0227">DNA damage</keyword>
<keyword id="KW-0228">DNA excision</keyword>
<keyword id="KW-0234">DNA repair</keyword>
<keyword id="KW-0238">DNA-binding</keyword>
<keyword id="KW-0255">Endonuclease</keyword>
<keyword id="KW-0267">Excision nuclease</keyword>
<keyword id="KW-0269">Exonuclease</keyword>
<keyword id="KW-0378">Hydrolase</keyword>
<keyword id="KW-0391">Immunity</keyword>
<keyword id="KW-0460">Magnesium</keyword>
<keyword id="KW-0469">Meiosis</keyword>
<keyword id="KW-0479">Metal-binding</keyword>
<keyword id="KW-0540">Nuclease</keyword>
<keyword id="KW-0539">Nucleus</keyword>
<keyword id="KW-0597">Phosphoprotein</keyword>
<keyword id="KW-1185">Reference proteome</keyword>
<dbReference type="EC" id="3.1.-.-"/>
<dbReference type="EMBL" id="AJ238213">
    <property type="protein sequence ID" value="CAB51863.1"/>
    <property type="molecule type" value="mRNA"/>
</dbReference>
<dbReference type="EMBL" id="AK028728">
    <property type="protein sequence ID" value="BAC26086.1"/>
    <property type="molecule type" value="mRNA"/>
</dbReference>
<dbReference type="EMBL" id="AK166425">
    <property type="protein sequence ID" value="BAE38768.1"/>
    <property type="molecule type" value="mRNA"/>
</dbReference>
<dbReference type="EMBL" id="BC006671">
    <property type="protein sequence ID" value="AAH06671.1"/>
    <property type="molecule type" value="mRNA"/>
</dbReference>
<dbReference type="CCDS" id="CCDS15551.1"/>
<dbReference type="RefSeq" id="NP_036142.2">
    <property type="nucleotide sequence ID" value="NM_012012.4"/>
</dbReference>
<dbReference type="RefSeq" id="XP_006496925.1">
    <property type="nucleotide sequence ID" value="XM_006496862.5"/>
</dbReference>
<dbReference type="RefSeq" id="XP_006496926.1">
    <property type="nucleotide sequence ID" value="XM_006496863.3"/>
</dbReference>
<dbReference type="RefSeq" id="XP_030110359.1">
    <property type="nucleotide sequence ID" value="XM_030254499.2"/>
</dbReference>
<dbReference type="SMR" id="Q9QZ11"/>
<dbReference type="BioGRID" id="205057">
    <property type="interactions" value="1"/>
</dbReference>
<dbReference type="CORUM" id="Q9QZ11"/>
<dbReference type="FunCoup" id="Q9QZ11">
    <property type="interactions" value="1763"/>
</dbReference>
<dbReference type="STRING" id="10090.ENSMUSP00000039376"/>
<dbReference type="iPTMnet" id="Q9QZ11"/>
<dbReference type="PhosphoSitePlus" id="Q9QZ11"/>
<dbReference type="PaxDb" id="10090-ENSMUSP00000039376"/>
<dbReference type="PeptideAtlas" id="Q9QZ11"/>
<dbReference type="ProteomicsDB" id="275555"/>
<dbReference type="Antibodypedia" id="34705">
    <property type="antibodies" value="382 antibodies from 34 providers"/>
</dbReference>
<dbReference type="DNASU" id="26909"/>
<dbReference type="Ensembl" id="ENSMUST00000039725.12">
    <property type="protein sequence ID" value="ENSMUSP00000039376.7"/>
    <property type="gene ID" value="ENSMUSG00000039748.12"/>
</dbReference>
<dbReference type="GeneID" id="26909"/>
<dbReference type="KEGG" id="mmu:26909"/>
<dbReference type="UCSC" id="uc007dtu.2">
    <property type="organism name" value="mouse"/>
</dbReference>
<dbReference type="AGR" id="MGI:1349427"/>
<dbReference type="CTD" id="9156"/>
<dbReference type="MGI" id="MGI:1349427">
    <property type="gene designation" value="Exo1"/>
</dbReference>
<dbReference type="VEuPathDB" id="HostDB:ENSMUSG00000039748"/>
<dbReference type="eggNOG" id="KOG2518">
    <property type="taxonomic scope" value="Eukaryota"/>
</dbReference>
<dbReference type="GeneTree" id="ENSGT00510000047676"/>
<dbReference type="HOGENOM" id="CLU_009851_0_0_1"/>
<dbReference type="InParanoid" id="Q9QZ11"/>
<dbReference type="OMA" id="AFCMKLV"/>
<dbReference type="OrthoDB" id="26491at2759"/>
<dbReference type="PhylomeDB" id="Q9QZ11"/>
<dbReference type="TreeFam" id="TF314997"/>
<dbReference type="Reactome" id="R-MMU-5358565">
    <property type="pathway name" value="Mismatch repair (MMR) directed by MSH2:MSH6 (MutSalpha)"/>
</dbReference>
<dbReference type="Reactome" id="R-MMU-5685938">
    <property type="pathway name" value="HDR through Single Strand Annealing (SSA)"/>
</dbReference>
<dbReference type="Reactome" id="R-MMU-5685942">
    <property type="pathway name" value="HDR through Homologous Recombination (HRR)"/>
</dbReference>
<dbReference type="Reactome" id="R-MMU-5693568">
    <property type="pathway name" value="Resolution of D-loop Structures through Holliday Junction Intermediates"/>
</dbReference>
<dbReference type="Reactome" id="R-MMU-5693579">
    <property type="pathway name" value="Homologous DNA Pairing and Strand Exchange"/>
</dbReference>
<dbReference type="Reactome" id="R-MMU-5693607">
    <property type="pathway name" value="Processing of DNA double-strand break ends"/>
</dbReference>
<dbReference type="Reactome" id="R-MMU-5693616">
    <property type="pathway name" value="Presynaptic phase of homologous DNA pairing and strand exchange"/>
</dbReference>
<dbReference type="Reactome" id="R-MMU-6804756">
    <property type="pathway name" value="Regulation of TP53 Activity through Phosphorylation"/>
</dbReference>
<dbReference type="Reactome" id="R-MMU-69473">
    <property type="pathway name" value="G2/M DNA damage checkpoint"/>
</dbReference>
<dbReference type="BioGRID-ORCS" id="26909">
    <property type="hits" value="14 hits in 117 CRISPR screens"/>
</dbReference>
<dbReference type="ChiTaRS" id="Exo1">
    <property type="organism name" value="mouse"/>
</dbReference>
<dbReference type="PRO" id="PR:Q9QZ11"/>
<dbReference type="Proteomes" id="UP000000589">
    <property type="component" value="Chromosome 1"/>
</dbReference>
<dbReference type="RNAct" id="Q9QZ11">
    <property type="molecule type" value="protein"/>
</dbReference>
<dbReference type="Bgee" id="ENSMUSG00000039748">
    <property type="expression patterns" value="Expressed in epiblast (generic) and 195 other cell types or tissues"/>
</dbReference>
<dbReference type="ExpressionAtlas" id="Q9QZ11">
    <property type="expression patterns" value="baseline and differential"/>
</dbReference>
<dbReference type="GO" id="GO:0016604">
    <property type="term" value="C:nuclear body"/>
    <property type="evidence" value="ECO:0007669"/>
    <property type="project" value="Ensembl"/>
</dbReference>
<dbReference type="GO" id="GO:0005634">
    <property type="term" value="C:nucleus"/>
    <property type="evidence" value="ECO:0000250"/>
    <property type="project" value="UniProtKB"/>
</dbReference>
<dbReference type="GO" id="GO:0005886">
    <property type="term" value="C:plasma membrane"/>
    <property type="evidence" value="ECO:0007669"/>
    <property type="project" value="Ensembl"/>
</dbReference>
<dbReference type="GO" id="GO:0008409">
    <property type="term" value="F:5'-3' exonuclease activity"/>
    <property type="evidence" value="ECO:0000266"/>
    <property type="project" value="MGI"/>
</dbReference>
<dbReference type="GO" id="GO:0003682">
    <property type="term" value="F:chromatin binding"/>
    <property type="evidence" value="ECO:0000314"/>
    <property type="project" value="MGI"/>
</dbReference>
<dbReference type="GO" id="GO:0003677">
    <property type="term" value="F:DNA binding"/>
    <property type="evidence" value="ECO:0007669"/>
    <property type="project" value="UniProtKB-KW"/>
</dbReference>
<dbReference type="GO" id="GO:0051908">
    <property type="term" value="F:double-stranded DNA 5'-3' DNA exonuclease activity"/>
    <property type="evidence" value="ECO:0007669"/>
    <property type="project" value="Ensembl"/>
</dbReference>
<dbReference type="GO" id="GO:0048256">
    <property type="term" value="F:flap endonuclease activity"/>
    <property type="evidence" value="ECO:0000250"/>
    <property type="project" value="UniProtKB"/>
</dbReference>
<dbReference type="GO" id="GO:0046872">
    <property type="term" value="F:metal ion binding"/>
    <property type="evidence" value="ECO:0007669"/>
    <property type="project" value="UniProtKB-KW"/>
</dbReference>
<dbReference type="GO" id="GO:0045145">
    <property type="term" value="F:single-stranded DNA 5'-3' DNA exonuclease activity"/>
    <property type="evidence" value="ECO:0000250"/>
    <property type="project" value="UniProtKB"/>
</dbReference>
<dbReference type="GO" id="GO:0006310">
    <property type="term" value="P:DNA recombination"/>
    <property type="evidence" value="ECO:0000250"/>
    <property type="project" value="UniProtKB"/>
</dbReference>
<dbReference type="GO" id="GO:0110025">
    <property type="term" value="P:DNA strand resection involved in replication fork processing"/>
    <property type="evidence" value="ECO:0007669"/>
    <property type="project" value="Ensembl"/>
</dbReference>
<dbReference type="GO" id="GO:0002455">
    <property type="term" value="P:humoral immune response mediated by circulating immunoglobulin"/>
    <property type="evidence" value="ECO:0000315"/>
    <property type="project" value="MGI"/>
</dbReference>
<dbReference type="GO" id="GO:0045190">
    <property type="term" value="P:isotype switching"/>
    <property type="evidence" value="ECO:0000315"/>
    <property type="project" value="MGI"/>
</dbReference>
<dbReference type="GO" id="GO:0051321">
    <property type="term" value="P:meiotic cell cycle"/>
    <property type="evidence" value="ECO:0007669"/>
    <property type="project" value="UniProtKB-KW"/>
</dbReference>
<dbReference type="GO" id="GO:0006298">
    <property type="term" value="P:mismatch repair"/>
    <property type="evidence" value="ECO:0000250"/>
    <property type="project" value="UniProtKB"/>
</dbReference>
<dbReference type="GO" id="GO:0006139">
    <property type="term" value="P:nucleobase-containing compound metabolic process"/>
    <property type="evidence" value="ECO:0000266"/>
    <property type="project" value="MGI"/>
</dbReference>
<dbReference type="GO" id="GO:0016446">
    <property type="term" value="P:somatic hypermutation of immunoglobulin genes"/>
    <property type="evidence" value="ECO:0000315"/>
    <property type="project" value="MGI"/>
</dbReference>
<dbReference type="CDD" id="cd09908">
    <property type="entry name" value="H3TH_EXO1"/>
    <property type="match status" value="1"/>
</dbReference>
<dbReference type="CDD" id="cd09857">
    <property type="entry name" value="PIN_EXO1"/>
    <property type="match status" value="1"/>
</dbReference>
<dbReference type="FunFam" id="3.40.50.1010:FF:000111">
    <property type="entry name" value="Exonuclease 1"/>
    <property type="match status" value="1"/>
</dbReference>
<dbReference type="FunFam" id="1.10.150.20:FF:000011">
    <property type="entry name" value="exonuclease 1"/>
    <property type="match status" value="1"/>
</dbReference>
<dbReference type="Gene3D" id="1.10.150.20">
    <property type="entry name" value="5' to 3' exonuclease, C-terminal subdomain"/>
    <property type="match status" value="1"/>
</dbReference>
<dbReference type="Gene3D" id="3.40.50.1010">
    <property type="entry name" value="5'-nuclease"/>
    <property type="match status" value="1"/>
</dbReference>
<dbReference type="InterPro" id="IPR036279">
    <property type="entry name" value="5-3_exonuclease_C_sf"/>
</dbReference>
<dbReference type="InterPro" id="IPR037315">
    <property type="entry name" value="EXO1_H3TH"/>
</dbReference>
<dbReference type="InterPro" id="IPR008918">
    <property type="entry name" value="HhH2"/>
</dbReference>
<dbReference type="InterPro" id="IPR029060">
    <property type="entry name" value="PIN-like_dom_sf"/>
</dbReference>
<dbReference type="InterPro" id="IPR044752">
    <property type="entry name" value="PIN-like_EXO1"/>
</dbReference>
<dbReference type="InterPro" id="IPR006086">
    <property type="entry name" value="XPG-I_dom"/>
</dbReference>
<dbReference type="InterPro" id="IPR006084">
    <property type="entry name" value="XPG/Rad2"/>
</dbReference>
<dbReference type="InterPro" id="IPR019974">
    <property type="entry name" value="XPG_CS"/>
</dbReference>
<dbReference type="InterPro" id="IPR006085">
    <property type="entry name" value="XPG_DNA_repair_N"/>
</dbReference>
<dbReference type="PANTHER" id="PTHR11081:SF8">
    <property type="entry name" value="EXONUCLEASE 1"/>
    <property type="match status" value="1"/>
</dbReference>
<dbReference type="PANTHER" id="PTHR11081">
    <property type="entry name" value="FLAP ENDONUCLEASE FAMILY MEMBER"/>
    <property type="match status" value="1"/>
</dbReference>
<dbReference type="Pfam" id="PF00867">
    <property type="entry name" value="XPG_I"/>
    <property type="match status" value="1"/>
</dbReference>
<dbReference type="Pfam" id="PF00752">
    <property type="entry name" value="XPG_N"/>
    <property type="match status" value="1"/>
</dbReference>
<dbReference type="PRINTS" id="PR00853">
    <property type="entry name" value="XPGRADSUPER"/>
</dbReference>
<dbReference type="SMART" id="SM00279">
    <property type="entry name" value="HhH2"/>
    <property type="match status" value="1"/>
</dbReference>
<dbReference type="SMART" id="SM00484">
    <property type="entry name" value="XPGI"/>
    <property type="match status" value="1"/>
</dbReference>
<dbReference type="SMART" id="SM00485">
    <property type="entry name" value="XPGN"/>
    <property type="match status" value="1"/>
</dbReference>
<dbReference type="SUPFAM" id="SSF47807">
    <property type="entry name" value="5' to 3' exonuclease, C-terminal subdomain"/>
    <property type="match status" value="1"/>
</dbReference>
<dbReference type="SUPFAM" id="SSF88723">
    <property type="entry name" value="PIN domain-like"/>
    <property type="match status" value="1"/>
</dbReference>
<dbReference type="PROSITE" id="PS00841">
    <property type="entry name" value="XPG_1"/>
    <property type="match status" value="1"/>
</dbReference>
<dbReference type="PROSITE" id="PS00842">
    <property type="entry name" value="XPG_2"/>
    <property type="match status" value="1"/>
</dbReference>